<dbReference type="SMR" id="Q9TWF9"/>
<dbReference type="GO" id="GO:0005615">
    <property type="term" value="C:extracellular space"/>
    <property type="evidence" value="ECO:0007669"/>
    <property type="project" value="TreeGrafter"/>
</dbReference>
<dbReference type="GO" id="GO:0042151">
    <property type="term" value="C:nematocyst"/>
    <property type="evidence" value="ECO:0007669"/>
    <property type="project" value="UniProtKB-SubCell"/>
</dbReference>
<dbReference type="GO" id="GO:0015459">
    <property type="term" value="F:potassium channel regulator activity"/>
    <property type="evidence" value="ECO:0007669"/>
    <property type="project" value="UniProtKB-KW"/>
</dbReference>
<dbReference type="GO" id="GO:0004867">
    <property type="term" value="F:serine-type endopeptidase inhibitor activity"/>
    <property type="evidence" value="ECO:0007669"/>
    <property type="project" value="UniProtKB-KW"/>
</dbReference>
<dbReference type="GO" id="GO:0090729">
    <property type="term" value="F:toxin activity"/>
    <property type="evidence" value="ECO:0007669"/>
    <property type="project" value="UniProtKB-KW"/>
</dbReference>
<dbReference type="FunFam" id="4.10.410.10:FF:000021">
    <property type="entry name" value="Serine protease inhibitor, putative"/>
    <property type="match status" value="1"/>
</dbReference>
<dbReference type="Gene3D" id="4.10.410.10">
    <property type="entry name" value="Pancreatic trypsin inhibitor Kunitz domain"/>
    <property type="match status" value="1"/>
</dbReference>
<dbReference type="InterPro" id="IPR002223">
    <property type="entry name" value="Kunitz_BPTI"/>
</dbReference>
<dbReference type="InterPro" id="IPR036880">
    <property type="entry name" value="Kunitz_BPTI_sf"/>
</dbReference>
<dbReference type="InterPro" id="IPR020901">
    <property type="entry name" value="Prtase_inh_Kunz-CS"/>
</dbReference>
<dbReference type="InterPro" id="IPR050098">
    <property type="entry name" value="TFPI/VKTCI-like"/>
</dbReference>
<dbReference type="PANTHER" id="PTHR10083:SF374">
    <property type="entry name" value="BPTI_KUNITZ INHIBITOR DOMAIN-CONTAINING PROTEIN"/>
    <property type="match status" value="1"/>
</dbReference>
<dbReference type="PANTHER" id="PTHR10083">
    <property type="entry name" value="KUNITZ-TYPE PROTEASE INHIBITOR-RELATED"/>
    <property type="match status" value="1"/>
</dbReference>
<dbReference type="Pfam" id="PF00014">
    <property type="entry name" value="Kunitz_BPTI"/>
    <property type="match status" value="1"/>
</dbReference>
<dbReference type="PRINTS" id="PR00759">
    <property type="entry name" value="BASICPTASE"/>
</dbReference>
<dbReference type="SMART" id="SM00131">
    <property type="entry name" value="KU"/>
    <property type="match status" value="1"/>
</dbReference>
<dbReference type="SUPFAM" id="SSF57362">
    <property type="entry name" value="BPTI-like"/>
    <property type="match status" value="1"/>
</dbReference>
<dbReference type="PROSITE" id="PS00280">
    <property type="entry name" value="BPTI_KUNITZ_1"/>
    <property type="match status" value="1"/>
</dbReference>
<dbReference type="PROSITE" id="PS50279">
    <property type="entry name" value="BPTI_KUNITZ_2"/>
    <property type="match status" value="1"/>
</dbReference>
<evidence type="ECO:0000250" key="1">
    <source>
        <dbReference type="UniProtKB" id="P31713"/>
    </source>
</evidence>
<evidence type="ECO:0000255" key="2">
    <source>
        <dbReference type="PROSITE-ProRule" id="PRU00031"/>
    </source>
</evidence>
<evidence type="ECO:0000269" key="3">
    <source>
    </source>
</evidence>
<evidence type="ECO:0000303" key="4">
    <source>
    </source>
</evidence>
<evidence type="ECO:0000303" key="5">
    <source>
    </source>
</evidence>
<evidence type="ECO:0000305" key="6"/>
<evidence type="ECO:0000305" key="7">
    <source>
    </source>
</evidence>
<feature type="chain" id="PRO_0000155413" description="KappaPI-actitoxin-Avd3c" evidence="3">
    <location>
        <begin position="1"/>
        <end position="58"/>
    </location>
</feature>
<feature type="domain" description="BPTI/Kunitz inhibitor" evidence="2">
    <location>
        <begin position="5"/>
        <end position="55"/>
    </location>
</feature>
<feature type="site" description="Reactive bond for trypsin" evidence="1">
    <location>
        <begin position="15"/>
        <end position="16"/>
    </location>
</feature>
<feature type="disulfide bond" evidence="2">
    <location>
        <begin position="5"/>
        <end position="55"/>
    </location>
</feature>
<feature type="disulfide bond" evidence="2">
    <location>
        <begin position="14"/>
        <end position="38"/>
    </location>
</feature>
<feature type="disulfide bond" evidence="2">
    <location>
        <begin position="30"/>
        <end position="51"/>
    </location>
</feature>
<protein>
    <recommendedName>
        <fullName evidence="4">KappaPI-actitoxin-Avd3c</fullName>
        <shortName evidence="4">KappaPI-AITX-Avd3c</shortName>
    </recommendedName>
    <alternativeName>
        <fullName evidence="5">Kalicludine-2</fullName>
        <shortName evidence="5">AsKC2</shortName>
    </alternativeName>
</protein>
<proteinExistence type="evidence at protein level"/>
<keyword id="KW-0903">Direct protein sequencing</keyword>
<keyword id="KW-1015">Disulfide bond</keyword>
<keyword id="KW-0872">Ion channel impairing toxin</keyword>
<keyword id="KW-0166">Nematocyst</keyword>
<keyword id="KW-0632">Potassium channel impairing toxin</keyword>
<keyword id="KW-0646">Protease inhibitor</keyword>
<keyword id="KW-0964">Secreted</keyword>
<keyword id="KW-0722">Serine protease inhibitor</keyword>
<keyword id="KW-0800">Toxin</keyword>
<keyword id="KW-1220">Voltage-gated potassium channel impairing toxin</keyword>
<accession>Q9TWF9</accession>
<sequence>INKDCLLPMDVGRCRARHPRYYYNSSSRRCEKFIYGGCRGNANNFITKKECEKVCGVR</sequence>
<reference key="1">
    <citation type="journal article" date="1995" name="J. Biol. Chem.">
        <title>Kalicludines and kaliseptine. Two different classes of sea anemone toxins for voltage sensitive K+ channels.</title>
        <authorList>
            <person name="Schweitz H."/>
            <person name="Bruhn T."/>
            <person name="Guillemare E."/>
            <person name="Moinier D."/>
            <person name="Lancelin J.-M."/>
            <person name="Beress L."/>
            <person name="Lazdunski M."/>
        </authorList>
    </citation>
    <scope>PROTEIN SEQUENCE</scope>
    <scope>FUNCTION</scope>
</reference>
<reference key="2">
    <citation type="journal article" date="2012" name="Toxicon">
        <title>Development of a rational nomenclature for naming peptide and protein toxins from sea anemones.</title>
        <authorList>
            <person name="Oliveira J.S."/>
            <person name="Fuentes-Silva D."/>
            <person name="King G.F."/>
        </authorList>
    </citation>
    <scope>NOMENCLATURE</scope>
</reference>
<comment type="function">
    <text evidence="3">Dual-function toxin that inhibits both the serine protease trypsin (Kd&lt;30 nM) and voltage-gated potassium channels Kv1.2/KCNA2 (IC(50)=1100 nM).</text>
</comment>
<comment type="subcellular location">
    <subcellularLocation>
        <location evidence="7">Secreted</location>
    </subcellularLocation>
    <subcellularLocation>
        <location evidence="6">Nematocyst</location>
    </subcellularLocation>
</comment>
<comment type="similarity">
    <text evidence="6">Belongs to the venom Kunitz-type family. Sea anemone type 2 potassium channel toxin subfamily.</text>
</comment>
<comment type="caution">
    <text evidence="6">Opinions are divided on whether Anemonia viridis (Forsskal, 1775) and Anemonia sulcata (Pennant, 1777) are separate species.</text>
</comment>
<name>VKT2_ANESU</name>
<organism>
    <name type="scientific">Anemonia sulcata</name>
    <name type="common">Mediterranean snakelocks sea anemone</name>
    <dbReference type="NCBI Taxonomy" id="6108"/>
    <lineage>
        <taxon>Eukaryota</taxon>
        <taxon>Metazoa</taxon>
        <taxon>Cnidaria</taxon>
        <taxon>Anthozoa</taxon>
        <taxon>Hexacorallia</taxon>
        <taxon>Actiniaria</taxon>
        <taxon>Actiniidae</taxon>
        <taxon>Anemonia</taxon>
    </lineage>
</organism>